<organism>
    <name type="scientific">Colletotrichum gloeosporioides</name>
    <name type="common">Anthracnose fungus</name>
    <name type="synonym">Glomerella cingulata</name>
    <dbReference type="NCBI Taxonomy" id="474922"/>
    <lineage>
        <taxon>Eukaryota</taxon>
        <taxon>Fungi</taxon>
        <taxon>Dikarya</taxon>
        <taxon>Ascomycota</taxon>
        <taxon>Pezizomycotina</taxon>
        <taxon>Sordariomycetes</taxon>
        <taxon>Hypocreomycetidae</taxon>
        <taxon>Glomerellales</taxon>
        <taxon>Glomerellaceae</taxon>
        <taxon>Colletotrichum</taxon>
        <taxon>Colletotrichum gloeosporioides species complex</taxon>
    </lineage>
</organism>
<gene>
    <name type="primary">GPDA</name>
</gene>
<reference key="1">
    <citation type="journal article" date="1992" name="Gene">
        <title>Cloning and molecular characterization of the glyceraldehyde-3-phosphate dehydrogenase-encoding gene and cDNA from the plant pathogenic fungus Glomerella cingulata.</title>
        <authorList>
            <person name="Templeton M.D."/>
            <person name="Rikkerink E.H.A."/>
            <person name="Solon S.L."/>
            <person name="Crowhurst R.N."/>
        </authorList>
    </citation>
    <scope>NUCLEOTIDE SEQUENCE [MRNA]</scope>
</reference>
<comment type="catalytic activity">
    <reaction evidence="2">
        <text>D-glyceraldehyde 3-phosphate + phosphate + NAD(+) = (2R)-3-phospho-glyceroyl phosphate + NADH + H(+)</text>
        <dbReference type="Rhea" id="RHEA:10300"/>
        <dbReference type="ChEBI" id="CHEBI:15378"/>
        <dbReference type="ChEBI" id="CHEBI:43474"/>
        <dbReference type="ChEBI" id="CHEBI:57540"/>
        <dbReference type="ChEBI" id="CHEBI:57604"/>
        <dbReference type="ChEBI" id="CHEBI:57945"/>
        <dbReference type="ChEBI" id="CHEBI:59776"/>
        <dbReference type="EC" id="1.2.1.12"/>
    </reaction>
</comment>
<comment type="pathway">
    <text>Carbohydrate degradation; glycolysis; pyruvate from D-glyceraldehyde 3-phosphate: step 1/5.</text>
</comment>
<comment type="subunit">
    <text>Homotetramer.</text>
</comment>
<comment type="subcellular location">
    <subcellularLocation>
        <location>Cytoplasm</location>
    </subcellularLocation>
</comment>
<comment type="similarity">
    <text evidence="3">Belongs to the glyceraldehyde-3-phosphate dehydrogenase family.</text>
</comment>
<sequence>MAPIKVGINGFGRIGRIVFRNAIEHPEVEIVAVNDPFIETKYAAYMLKYDSTHGIFNGEIKQEGNDLVINGKTVKFYTERDPAAIPWKETGADYVVESTGVFTTTDKAKAHLQGGAKKVIISAPSADAPMYVMVVNEKSYDGSADVISNASCTTNCLAPLAKVINDKFGIVEGLMTTVHSYTATQKTVHGPSAKDWRGGRTAAQNIIPSSTGAAKAVGKVIPELNGKLTDMSMRVPTTNVSVVDLTARIEKGASYDEIKQAIKEAAEGPLKGVLAYTEDDVVSTDMIGNPNSSIFDAKAGISLNNNFVKLVSWYDNEWGYSRRVLDLLAHVAKVDASK</sequence>
<name>G3P_COLGL</name>
<keyword id="KW-0963">Cytoplasm</keyword>
<keyword id="KW-0324">Glycolysis</keyword>
<keyword id="KW-0520">NAD</keyword>
<keyword id="KW-0560">Oxidoreductase</keyword>
<protein>
    <recommendedName>
        <fullName>Glyceraldehyde-3-phosphate dehydrogenase</fullName>
        <shortName>GAPDH</shortName>
        <ecNumber>1.2.1.12</ecNumber>
    </recommendedName>
</protein>
<evidence type="ECO:0000250" key="1"/>
<evidence type="ECO:0000255" key="2">
    <source>
        <dbReference type="PROSITE-ProRule" id="PRU10009"/>
    </source>
</evidence>
<evidence type="ECO:0000305" key="3"/>
<feature type="chain" id="PRO_0000145547" description="Glyceraldehyde-3-phosphate dehydrogenase">
    <location>
        <begin position="1"/>
        <end position="338"/>
    </location>
</feature>
<feature type="active site" description="Nucleophile" evidence="2">
    <location>
        <position position="152"/>
    </location>
</feature>
<feature type="binding site" evidence="1">
    <location>
        <begin position="13"/>
        <end position="14"/>
    </location>
    <ligand>
        <name>NAD(+)</name>
        <dbReference type="ChEBI" id="CHEBI:57540"/>
    </ligand>
</feature>
<feature type="binding site" evidence="1">
    <location>
        <position position="35"/>
    </location>
    <ligand>
        <name>NAD(+)</name>
        <dbReference type="ChEBI" id="CHEBI:57540"/>
    </ligand>
</feature>
<feature type="binding site" evidence="1">
    <location>
        <position position="80"/>
    </location>
    <ligand>
        <name>NAD(+)</name>
        <dbReference type="ChEBI" id="CHEBI:57540"/>
    </ligand>
</feature>
<feature type="binding site" evidence="1">
    <location>
        <begin position="151"/>
        <end position="153"/>
    </location>
    <ligand>
        <name>D-glyceraldehyde 3-phosphate</name>
        <dbReference type="ChEBI" id="CHEBI:59776"/>
    </ligand>
</feature>
<feature type="binding site" evidence="1">
    <location>
        <position position="182"/>
    </location>
    <ligand>
        <name>D-glyceraldehyde 3-phosphate</name>
        <dbReference type="ChEBI" id="CHEBI:59776"/>
    </ligand>
</feature>
<feature type="binding site" evidence="1">
    <location>
        <begin position="211"/>
        <end position="212"/>
    </location>
    <ligand>
        <name>D-glyceraldehyde 3-phosphate</name>
        <dbReference type="ChEBI" id="CHEBI:59776"/>
    </ligand>
</feature>
<feature type="binding site" evidence="1">
    <location>
        <position position="234"/>
    </location>
    <ligand>
        <name>D-glyceraldehyde 3-phosphate</name>
        <dbReference type="ChEBI" id="CHEBI:59776"/>
    </ligand>
</feature>
<feature type="binding site" evidence="1">
    <location>
        <position position="316"/>
    </location>
    <ligand>
        <name>NAD(+)</name>
        <dbReference type="ChEBI" id="CHEBI:57540"/>
    </ligand>
</feature>
<feature type="site" description="Activates thiol group during catalysis" evidence="1">
    <location>
        <position position="179"/>
    </location>
</feature>
<proteinExistence type="evidence at transcript level"/>
<accession>P35143</accession>
<dbReference type="EC" id="1.2.1.12"/>
<dbReference type="EMBL" id="M93427">
    <property type="protein sequence ID" value="AAA02486.1"/>
    <property type="molecule type" value="Unassigned_RNA"/>
</dbReference>
<dbReference type="EMBL" id="M88109">
    <property type="protein sequence ID" value="AAA02485.1"/>
    <property type="molecule type" value="mRNA"/>
</dbReference>
<dbReference type="PIR" id="JN0452">
    <property type="entry name" value="JN0452"/>
</dbReference>
<dbReference type="SMR" id="P35143"/>
<dbReference type="UniPathway" id="UPA00109">
    <property type="reaction ID" value="UER00184"/>
</dbReference>
<dbReference type="GO" id="GO:0005829">
    <property type="term" value="C:cytosol"/>
    <property type="evidence" value="ECO:0007669"/>
    <property type="project" value="TreeGrafter"/>
</dbReference>
<dbReference type="GO" id="GO:0004365">
    <property type="term" value="F:glyceraldehyde-3-phosphate dehydrogenase (NAD+) (phosphorylating) activity"/>
    <property type="evidence" value="ECO:0007669"/>
    <property type="project" value="UniProtKB-EC"/>
</dbReference>
<dbReference type="GO" id="GO:0051287">
    <property type="term" value="F:NAD binding"/>
    <property type="evidence" value="ECO:0007669"/>
    <property type="project" value="InterPro"/>
</dbReference>
<dbReference type="GO" id="GO:0050661">
    <property type="term" value="F:NADP binding"/>
    <property type="evidence" value="ECO:0007669"/>
    <property type="project" value="InterPro"/>
</dbReference>
<dbReference type="GO" id="GO:0006006">
    <property type="term" value="P:glucose metabolic process"/>
    <property type="evidence" value="ECO:0007669"/>
    <property type="project" value="InterPro"/>
</dbReference>
<dbReference type="GO" id="GO:0006096">
    <property type="term" value="P:glycolytic process"/>
    <property type="evidence" value="ECO:0007669"/>
    <property type="project" value="UniProtKB-UniPathway"/>
</dbReference>
<dbReference type="CDD" id="cd18126">
    <property type="entry name" value="GAPDH_I_C"/>
    <property type="match status" value="1"/>
</dbReference>
<dbReference type="CDD" id="cd05214">
    <property type="entry name" value="GAPDH_I_N"/>
    <property type="match status" value="1"/>
</dbReference>
<dbReference type="FunFam" id="3.30.360.10:FF:000001">
    <property type="entry name" value="Glyceraldehyde-3-phosphate dehydrogenase"/>
    <property type="match status" value="1"/>
</dbReference>
<dbReference type="FunFam" id="3.40.50.720:FF:000020">
    <property type="entry name" value="Glyceraldehyde-3-phosphate dehydrogenase"/>
    <property type="match status" value="1"/>
</dbReference>
<dbReference type="Gene3D" id="3.30.360.10">
    <property type="entry name" value="Dihydrodipicolinate Reductase, domain 2"/>
    <property type="match status" value="1"/>
</dbReference>
<dbReference type="Gene3D" id="3.40.50.720">
    <property type="entry name" value="NAD(P)-binding Rossmann-like Domain"/>
    <property type="match status" value="1"/>
</dbReference>
<dbReference type="InterPro" id="IPR020831">
    <property type="entry name" value="GlycerAld/Erythrose_P_DH"/>
</dbReference>
<dbReference type="InterPro" id="IPR020830">
    <property type="entry name" value="GlycerAld_3-P_DH_AS"/>
</dbReference>
<dbReference type="InterPro" id="IPR020829">
    <property type="entry name" value="GlycerAld_3-P_DH_cat"/>
</dbReference>
<dbReference type="InterPro" id="IPR020828">
    <property type="entry name" value="GlycerAld_3-P_DH_NAD(P)-bd"/>
</dbReference>
<dbReference type="InterPro" id="IPR006424">
    <property type="entry name" value="Glyceraldehyde-3-P_DH_1"/>
</dbReference>
<dbReference type="InterPro" id="IPR036291">
    <property type="entry name" value="NAD(P)-bd_dom_sf"/>
</dbReference>
<dbReference type="NCBIfam" id="TIGR01534">
    <property type="entry name" value="GAPDH-I"/>
    <property type="match status" value="1"/>
</dbReference>
<dbReference type="PANTHER" id="PTHR10836">
    <property type="entry name" value="GLYCERALDEHYDE 3-PHOSPHATE DEHYDROGENASE"/>
    <property type="match status" value="1"/>
</dbReference>
<dbReference type="PANTHER" id="PTHR10836:SF76">
    <property type="entry name" value="GLYCERALDEHYDE-3-PHOSPHATE DEHYDROGENASE-RELATED"/>
    <property type="match status" value="1"/>
</dbReference>
<dbReference type="Pfam" id="PF02800">
    <property type="entry name" value="Gp_dh_C"/>
    <property type="match status" value="1"/>
</dbReference>
<dbReference type="Pfam" id="PF00044">
    <property type="entry name" value="Gp_dh_N"/>
    <property type="match status" value="1"/>
</dbReference>
<dbReference type="PIRSF" id="PIRSF000149">
    <property type="entry name" value="GAP_DH"/>
    <property type="match status" value="1"/>
</dbReference>
<dbReference type="PRINTS" id="PR00078">
    <property type="entry name" value="G3PDHDRGNASE"/>
</dbReference>
<dbReference type="SMART" id="SM00846">
    <property type="entry name" value="Gp_dh_N"/>
    <property type="match status" value="1"/>
</dbReference>
<dbReference type="SUPFAM" id="SSF55347">
    <property type="entry name" value="Glyceraldehyde-3-phosphate dehydrogenase-like, C-terminal domain"/>
    <property type="match status" value="1"/>
</dbReference>
<dbReference type="SUPFAM" id="SSF51735">
    <property type="entry name" value="NAD(P)-binding Rossmann-fold domains"/>
    <property type="match status" value="1"/>
</dbReference>
<dbReference type="PROSITE" id="PS00071">
    <property type="entry name" value="GAPDH"/>
    <property type="match status" value="1"/>
</dbReference>